<dbReference type="EC" id="2.7.7.80" evidence="1"/>
<dbReference type="EC" id="2.8.1.11" evidence="1"/>
<dbReference type="EMBL" id="AAAB01008987">
    <property type="protein sequence ID" value="EAA01635.4"/>
    <property type="molecule type" value="Genomic_DNA"/>
</dbReference>
<dbReference type="SMR" id="Q7PY41"/>
<dbReference type="FunCoup" id="Q7PY41">
    <property type="interactions" value="461"/>
</dbReference>
<dbReference type="STRING" id="7165.Q7PY41"/>
<dbReference type="PaxDb" id="7165-AGAP001737-PA"/>
<dbReference type="EnsemblMetazoa" id="AGAP001737-RA">
    <property type="protein sequence ID" value="AGAP001737-PA"/>
    <property type="gene ID" value="AGAP001737"/>
</dbReference>
<dbReference type="GeneID" id="1281438"/>
<dbReference type="KEGG" id="aga:1281438"/>
<dbReference type="CTD" id="34187"/>
<dbReference type="VEuPathDB" id="VectorBase:AGAMI1_012322"/>
<dbReference type="VEuPathDB" id="VectorBase:AGAP001737"/>
<dbReference type="eggNOG" id="KOG2017">
    <property type="taxonomic scope" value="Eukaryota"/>
</dbReference>
<dbReference type="HOGENOM" id="CLU_013325_1_2_1"/>
<dbReference type="InParanoid" id="Q7PY41"/>
<dbReference type="OMA" id="IPDVGMD"/>
<dbReference type="PhylomeDB" id="Q7PY41"/>
<dbReference type="UniPathway" id="UPA00344"/>
<dbReference type="UniPathway" id="UPA00988"/>
<dbReference type="Proteomes" id="UP000007062">
    <property type="component" value="Chromosome 2R"/>
</dbReference>
<dbReference type="GO" id="GO:0005737">
    <property type="term" value="C:cytoplasm"/>
    <property type="evidence" value="ECO:0000318"/>
    <property type="project" value="GO_Central"/>
</dbReference>
<dbReference type="GO" id="GO:0005829">
    <property type="term" value="C:cytosol"/>
    <property type="evidence" value="ECO:0000250"/>
    <property type="project" value="UniProtKB"/>
</dbReference>
<dbReference type="GO" id="GO:0005524">
    <property type="term" value="F:ATP binding"/>
    <property type="evidence" value="ECO:0007669"/>
    <property type="project" value="UniProtKB-KW"/>
</dbReference>
<dbReference type="GO" id="GO:0046872">
    <property type="term" value="F:metal ion binding"/>
    <property type="evidence" value="ECO:0007669"/>
    <property type="project" value="UniProtKB-KW"/>
</dbReference>
<dbReference type="GO" id="GO:0061605">
    <property type="term" value="F:molybdopterin-synthase adenylyltransferase activity"/>
    <property type="evidence" value="ECO:0007669"/>
    <property type="project" value="UniProtKB-EC"/>
</dbReference>
<dbReference type="GO" id="GO:0061604">
    <property type="term" value="F:molybdopterin-synthase sulfurtransferase activity"/>
    <property type="evidence" value="ECO:0000250"/>
    <property type="project" value="UniProtKB"/>
</dbReference>
<dbReference type="GO" id="GO:0016779">
    <property type="term" value="F:nucleotidyltransferase activity"/>
    <property type="evidence" value="ECO:0000318"/>
    <property type="project" value="GO_Central"/>
</dbReference>
<dbReference type="GO" id="GO:0004792">
    <property type="term" value="F:thiosulfate-cyanide sulfurtransferase activity"/>
    <property type="evidence" value="ECO:0000318"/>
    <property type="project" value="GO_Central"/>
</dbReference>
<dbReference type="GO" id="GO:0042292">
    <property type="term" value="F:URM1 activating enzyme activity"/>
    <property type="evidence" value="ECO:0000318"/>
    <property type="project" value="GO_Central"/>
</dbReference>
<dbReference type="GO" id="GO:0006777">
    <property type="term" value="P:Mo-molybdopterin cofactor biosynthetic process"/>
    <property type="evidence" value="ECO:0000250"/>
    <property type="project" value="UniProtKB"/>
</dbReference>
<dbReference type="GO" id="GO:0032447">
    <property type="term" value="P:protein urmylation"/>
    <property type="evidence" value="ECO:0000318"/>
    <property type="project" value="GO_Central"/>
</dbReference>
<dbReference type="GO" id="GO:0002143">
    <property type="term" value="P:tRNA wobble position uridine thiolation"/>
    <property type="evidence" value="ECO:0000318"/>
    <property type="project" value="GO_Central"/>
</dbReference>
<dbReference type="CDD" id="cd00757">
    <property type="entry name" value="ThiF_MoeB_HesA_family"/>
    <property type="match status" value="1"/>
</dbReference>
<dbReference type="FunFam" id="3.40.250.10:FF:000014">
    <property type="entry name" value="Adenylyltransferase and sulfurtransferase MOCS3"/>
    <property type="match status" value="1"/>
</dbReference>
<dbReference type="FunFam" id="3.40.50.720:FF:000206">
    <property type="entry name" value="Adenylyltransferase and sulfurtransferase MOCS3"/>
    <property type="match status" value="1"/>
</dbReference>
<dbReference type="Gene3D" id="3.40.50.720">
    <property type="entry name" value="NAD(P)-binding Rossmann-like Domain"/>
    <property type="match status" value="1"/>
</dbReference>
<dbReference type="Gene3D" id="3.40.250.10">
    <property type="entry name" value="Rhodanese-like domain"/>
    <property type="match status" value="1"/>
</dbReference>
<dbReference type="HAMAP" id="MF_03049">
    <property type="entry name" value="MOCS3_Uba4"/>
    <property type="match status" value="1"/>
</dbReference>
<dbReference type="InterPro" id="IPR028885">
    <property type="entry name" value="MOCS3/Uba4"/>
</dbReference>
<dbReference type="InterPro" id="IPR001763">
    <property type="entry name" value="Rhodanese-like_dom"/>
</dbReference>
<dbReference type="InterPro" id="IPR036873">
    <property type="entry name" value="Rhodanese-like_dom_sf"/>
</dbReference>
<dbReference type="InterPro" id="IPR045886">
    <property type="entry name" value="ThiF/MoeB/HesA"/>
</dbReference>
<dbReference type="InterPro" id="IPR000594">
    <property type="entry name" value="ThiF_NAD_FAD-bd"/>
</dbReference>
<dbReference type="InterPro" id="IPR035985">
    <property type="entry name" value="Ubiquitin-activating_enz"/>
</dbReference>
<dbReference type="NCBIfam" id="NF004281">
    <property type="entry name" value="PRK05690.1"/>
    <property type="match status" value="1"/>
</dbReference>
<dbReference type="PANTHER" id="PTHR10953:SF102">
    <property type="entry name" value="ADENYLYLTRANSFERASE AND SULFURTRANSFERASE MOCS3"/>
    <property type="match status" value="1"/>
</dbReference>
<dbReference type="PANTHER" id="PTHR10953">
    <property type="entry name" value="UBIQUITIN-ACTIVATING ENZYME E1"/>
    <property type="match status" value="1"/>
</dbReference>
<dbReference type="Pfam" id="PF00581">
    <property type="entry name" value="Rhodanese"/>
    <property type="match status" value="1"/>
</dbReference>
<dbReference type="Pfam" id="PF00899">
    <property type="entry name" value="ThiF"/>
    <property type="match status" value="1"/>
</dbReference>
<dbReference type="SMART" id="SM00450">
    <property type="entry name" value="RHOD"/>
    <property type="match status" value="1"/>
</dbReference>
<dbReference type="SUPFAM" id="SSF69572">
    <property type="entry name" value="Activating enzymes of the ubiquitin-like proteins"/>
    <property type="match status" value="1"/>
</dbReference>
<dbReference type="PROSITE" id="PS50206">
    <property type="entry name" value="RHODANESE_3"/>
    <property type="match status" value="1"/>
</dbReference>
<comment type="function">
    <text evidence="1">Plays a central role in 2-thiolation of mcm(5)S(2)U at tRNA wobble positions of cytosolic tRNA(Lys), tRNA(Glu) and tRNA(Gln). Also essential during biosynthesis of the molybdenum cofactor. Acts by mediating the C-terminal thiocarboxylation of sulfur carriers URM1 and MOCS2A. Its N-terminus first activates URM1 and MOCS2A as acyl-adenylates (-COAMP), then the persulfide sulfur on the catalytic cysteine is transferred to URM1 and MOCS2A to form thiocarboxylation (-COSH) of their C-terminus. The reaction probably involves hydrogen sulfide that is generated from the persulfide intermediate and that acts as a nucleophile towards URM1 and MOCS2A. Subsequently, a transient disulfide bond is formed. Does not use thiosulfate as sulfur donor; NFS1 probably acting as a sulfur donor for thiocarboxylation reactions.</text>
</comment>
<comment type="catalytic activity">
    <reaction evidence="1">
        <text>[molybdopterin-synthase sulfur-carrier protein]-C-terminal Gly-Gly + ATP + H(+) = [molybdopterin-synthase sulfur-carrier protein]-C-terminal Gly-Gly-AMP + diphosphate</text>
        <dbReference type="Rhea" id="RHEA:43616"/>
        <dbReference type="Rhea" id="RHEA-COMP:12159"/>
        <dbReference type="Rhea" id="RHEA-COMP:12202"/>
        <dbReference type="ChEBI" id="CHEBI:15378"/>
        <dbReference type="ChEBI" id="CHEBI:30616"/>
        <dbReference type="ChEBI" id="CHEBI:33019"/>
        <dbReference type="ChEBI" id="CHEBI:90618"/>
        <dbReference type="ChEBI" id="CHEBI:90778"/>
        <dbReference type="EC" id="2.7.7.80"/>
    </reaction>
</comment>
<comment type="catalytic activity">
    <reaction evidence="1">
        <text>[molybdopterin-synthase sulfur-carrier protein]-C-terminal Gly-Gly-AMP + S-sulfanyl-L-cysteinyl-[cysteine desulfurase] + AH2 = [molybdopterin-synthase sulfur-carrier protein]-C-terminal-Gly-aminoethanethioate + L-cysteinyl-[cysteine desulfurase] + A + AMP + 2 H(+)</text>
        <dbReference type="Rhea" id="RHEA:48612"/>
        <dbReference type="Rhea" id="RHEA-COMP:12157"/>
        <dbReference type="Rhea" id="RHEA-COMP:12158"/>
        <dbReference type="Rhea" id="RHEA-COMP:12159"/>
        <dbReference type="Rhea" id="RHEA-COMP:19907"/>
        <dbReference type="ChEBI" id="CHEBI:13193"/>
        <dbReference type="ChEBI" id="CHEBI:15378"/>
        <dbReference type="ChEBI" id="CHEBI:17499"/>
        <dbReference type="ChEBI" id="CHEBI:29950"/>
        <dbReference type="ChEBI" id="CHEBI:61963"/>
        <dbReference type="ChEBI" id="CHEBI:90618"/>
        <dbReference type="ChEBI" id="CHEBI:232372"/>
        <dbReference type="ChEBI" id="CHEBI:456215"/>
        <dbReference type="EC" id="2.8.1.11"/>
    </reaction>
</comment>
<comment type="cofactor">
    <cofactor evidence="1">
        <name>Zn(2+)</name>
        <dbReference type="ChEBI" id="CHEBI:29105"/>
    </cofactor>
    <text evidence="1">Binds 1 zinc ion per subunit.</text>
</comment>
<comment type="pathway">
    <text evidence="1">tRNA modification; 5-methoxycarbonylmethyl-2-thiouridine-tRNA biosynthesis.</text>
</comment>
<comment type="pathway">
    <text evidence="1">Cofactor biosynthesis; molybdopterin biosynthesis.</text>
</comment>
<comment type="subcellular location">
    <subcellularLocation>
        <location evidence="1">Cytoplasm</location>
    </subcellularLocation>
</comment>
<comment type="similarity">
    <text evidence="1">In the N-terminal section; belongs to the HesA/MoeB/ThiF family. UBA4 subfamily.</text>
</comment>
<feature type="chain" id="PRO_0000369201" description="Adenylyltransferase and sulfurtransferase MOCS3">
    <location>
        <begin position="1"/>
        <end position="441"/>
    </location>
</feature>
<feature type="domain" description="Rhodanese" evidence="1">
    <location>
        <begin position="339"/>
        <end position="439"/>
    </location>
</feature>
<feature type="active site" description="Glycyl thioester intermediate; for adenylyltransferase activity" evidence="1">
    <location>
        <position position="230"/>
    </location>
</feature>
<feature type="active site" description="Cysteine persulfide intermediate; for sulfurtransferase activity" evidence="1">
    <location>
        <position position="395"/>
    </location>
</feature>
<feature type="binding site" evidence="1">
    <location>
        <position position="83"/>
    </location>
    <ligand>
        <name>ATP</name>
        <dbReference type="ChEBI" id="CHEBI:30616"/>
    </ligand>
</feature>
<feature type="binding site" evidence="1">
    <location>
        <position position="104"/>
    </location>
    <ligand>
        <name>ATP</name>
        <dbReference type="ChEBI" id="CHEBI:30616"/>
    </ligand>
</feature>
<feature type="binding site" evidence="1">
    <location>
        <begin position="111"/>
        <end position="115"/>
    </location>
    <ligand>
        <name>ATP</name>
        <dbReference type="ChEBI" id="CHEBI:30616"/>
    </ligand>
</feature>
<feature type="binding site" evidence="1">
    <location>
        <position position="128"/>
    </location>
    <ligand>
        <name>ATP</name>
        <dbReference type="ChEBI" id="CHEBI:30616"/>
    </ligand>
</feature>
<feature type="binding site" evidence="1">
    <location>
        <begin position="172"/>
        <end position="173"/>
    </location>
    <ligand>
        <name>ATP</name>
        <dbReference type="ChEBI" id="CHEBI:30616"/>
    </ligand>
</feature>
<feature type="binding site" evidence="1">
    <location>
        <position position="213"/>
    </location>
    <ligand>
        <name>Zn(2+)</name>
        <dbReference type="ChEBI" id="CHEBI:29105"/>
    </ligand>
</feature>
<feature type="binding site" evidence="1">
    <location>
        <position position="216"/>
    </location>
    <ligand>
        <name>Zn(2+)</name>
        <dbReference type="ChEBI" id="CHEBI:29105"/>
    </ligand>
</feature>
<feature type="binding site" evidence="1">
    <location>
        <position position="288"/>
    </location>
    <ligand>
        <name>Zn(2+)</name>
        <dbReference type="ChEBI" id="CHEBI:29105"/>
    </ligand>
</feature>
<feature type="binding site" evidence="1">
    <location>
        <position position="291"/>
    </location>
    <ligand>
        <name>Zn(2+)</name>
        <dbReference type="ChEBI" id="CHEBI:29105"/>
    </ligand>
</feature>
<gene>
    <name type="ORF">AGAP001737</name>
</gene>
<organism>
    <name type="scientific">Anopheles gambiae</name>
    <name type="common">African malaria mosquito</name>
    <dbReference type="NCBI Taxonomy" id="7165"/>
    <lineage>
        <taxon>Eukaryota</taxon>
        <taxon>Metazoa</taxon>
        <taxon>Ecdysozoa</taxon>
        <taxon>Arthropoda</taxon>
        <taxon>Hexapoda</taxon>
        <taxon>Insecta</taxon>
        <taxon>Pterygota</taxon>
        <taxon>Neoptera</taxon>
        <taxon>Endopterygota</taxon>
        <taxon>Diptera</taxon>
        <taxon>Nematocera</taxon>
        <taxon>Culicoidea</taxon>
        <taxon>Culicidae</taxon>
        <taxon>Anophelinae</taxon>
        <taxon>Anopheles</taxon>
    </lineage>
</organism>
<proteinExistence type="inferred from homology"/>
<sequence length="441" mass="48574">MGEMNGEGQIEVLENDIRTLRKQLQEKVQQLKTLKKHFQKNCITKLNNDEIARYSRQIILSEIGVQGQLKLKKASVLVVGAGGLGCPAALYLAGAGIGRIGVLDYDEVELTNLHRQLLHTEATVGLTKVTSVQSYLEQLNSQIEIETHHAQLTSENALALLEPYDVVVDATDNVATRYLLNDACVLLRKPLVSGSALQLEGQLTVYNYRGGPCYRCLFPTPPPPESVTNCGDGGVLGAITGVIGALQALETIKIILSNEGVLAGRLLLFDGQQSAFRNLKLRPKKPTCAVCSEAPTLTKLIDYEQFCGMRATDKDAALTLLEPCERISVRDYHDGWLAAGRDHLLVDVRNANQYEMCQLPGAPVNVPIEDILSNRRTEELLARAQQAQLPVYVVCRRGNDSQLAVRHLAPLFRERNLPAPRDLIGGLHAWTKTIDPNFPIY</sequence>
<evidence type="ECO:0000255" key="1">
    <source>
        <dbReference type="HAMAP-Rule" id="MF_03049"/>
    </source>
</evidence>
<protein>
    <recommendedName>
        <fullName evidence="1">Adenylyltransferase and sulfurtransferase MOCS3</fullName>
    </recommendedName>
    <alternativeName>
        <fullName evidence="1">Molybdenum cofactor synthesis protein 3</fullName>
    </alternativeName>
    <domain>
        <recommendedName>
            <fullName evidence="1">Molybdopterin-synthase adenylyltransferase</fullName>
            <ecNumber evidence="1">2.7.7.80</ecNumber>
        </recommendedName>
        <alternativeName>
            <fullName evidence="1">Adenylyltransferase MOCS3</fullName>
        </alternativeName>
        <alternativeName>
            <fullName evidence="1">Sulfur carrier protein MOCS2A adenylyltransferase</fullName>
        </alternativeName>
    </domain>
    <domain>
        <recommendedName>
            <fullName evidence="1">Molybdopterin-synthase sulfurtransferase</fullName>
            <ecNumber evidence="1">2.8.1.11</ecNumber>
        </recommendedName>
        <alternativeName>
            <fullName evidence="1">Sulfur carrier protein MOCS2A sulfurtransferase</fullName>
        </alternativeName>
        <alternativeName>
            <fullName evidence="1">Sulfurtransferase MOCS3</fullName>
        </alternativeName>
    </domain>
</protein>
<keyword id="KW-0067">ATP-binding</keyword>
<keyword id="KW-0963">Cytoplasm</keyword>
<keyword id="KW-0479">Metal-binding</keyword>
<keyword id="KW-0501">Molybdenum cofactor biosynthesis</keyword>
<keyword id="KW-0511">Multifunctional enzyme</keyword>
<keyword id="KW-0547">Nucleotide-binding</keyword>
<keyword id="KW-1185">Reference proteome</keyword>
<keyword id="KW-0808">Transferase</keyword>
<keyword id="KW-0819">tRNA processing</keyword>
<keyword id="KW-0862">Zinc</keyword>
<reference key="1">
    <citation type="journal article" date="2002" name="Science">
        <title>The genome sequence of the malaria mosquito Anopheles gambiae.</title>
        <authorList>
            <person name="Holt R.A."/>
            <person name="Subramanian G.M."/>
            <person name="Halpern A."/>
            <person name="Sutton G.G."/>
            <person name="Charlab R."/>
            <person name="Nusskern D.R."/>
            <person name="Wincker P."/>
            <person name="Clark A.G."/>
            <person name="Ribeiro J.M.C."/>
            <person name="Wides R."/>
            <person name="Salzberg S.L."/>
            <person name="Loftus B.J."/>
            <person name="Yandell M.D."/>
            <person name="Majoros W.H."/>
            <person name="Rusch D.B."/>
            <person name="Lai Z."/>
            <person name="Kraft C.L."/>
            <person name="Abril J.F."/>
            <person name="Anthouard V."/>
            <person name="Arensburger P."/>
            <person name="Atkinson P.W."/>
            <person name="Baden H."/>
            <person name="de Berardinis V."/>
            <person name="Baldwin D."/>
            <person name="Benes V."/>
            <person name="Biedler J."/>
            <person name="Blass C."/>
            <person name="Bolanos R."/>
            <person name="Boscus D."/>
            <person name="Barnstead M."/>
            <person name="Cai S."/>
            <person name="Center A."/>
            <person name="Chaturverdi K."/>
            <person name="Christophides G.K."/>
            <person name="Chrystal M.A.M."/>
            <person name="Clamp M."/>
            <person name="Cravchik A."/>
            <person name="Curwen V."/>
            <person name="Dana A."/>
            <person name="Delcher A."/>
            <person name="Dew I."/>
            <person name="Evans C.A."/>
            <person name="Flanigan M."/>
            <person name="Grundschober-Freimoser A."/>
            <person name="Friedli L."/>
            <person name="Gu Z."/>
            <person name="Guan P."/>
            <person name="Guigo R."/>
            <person name="Hillenmeyer M.E."/>
            <person name="Hladun S.L."/>
            <person name="Hogan J.R."/>
            <person name="Hong Y.S."/>
            <person name="Hoover J."/>
            <person name="Jaillon O."/>
            <person name="Ke Z."/>
            <person name="Kodira C.D."/>
            <person name="Kokoza E."/>
            <person name="Koutsos A."/>
            <person name="Letunic I."/>
            <person name="Levitsky A.A."/>
            <person name="Liang Y."/>
            <person name="Lin J.-J."/>
            <person name="Lobo N.F."/>
            <person name="Lopez J.R."/>
            <person name="Malek J.A."/>
            <person name="McIntosh T.C."/>
            <person name="Meister S."/>
            <person name="Miller J.R."/>
            <person name="Mobarry C."/>
            <person name="Mongin E."/>
            <person name="Murphy S.D."/>
            <person name="O'Brochta D.A."/>
            <person name="Pfannkoch C."/>
            <person name="Qi R."/>
            <person name="Regier M.A."/>
            <person name="Remington K."/>
            <person name="Shao H."/>
            <person name="Sharakhova M.V."/>
            <person name="Sitter C.D."/>
            <person name="Shetty J."/>
            <person name="Smith T.J."/>
            <person name="Strong R."/>
            <person name="Sun J."/>
            <person name="Thomasova D."/>
            <person name="Ton L.Q."/>
            <person name="Topalis P."/>
            <person name="Tu Z.J."/>
            <person name="Unger M.F."/>
            <person name="Walenz B."/>
            <person name="Wang A.H."/>
            <person name="Wang J."/>
            <person name="Wang M."/>
            <person name="Wang X."/>
            <person name="Woodford K.J."/>
            <person name="Wortman J.R."/>
            <person name="Wu M."/>
            <person name="Yao A."/>
            <person name="Zdobnov E.M."/>
            <person name="Zhang H."/>
            <person name="Zhao Q."/>
            <person name="Zhao S."/>
            <person name="Zhu S.C."/>
            <person name="Zhimulev I."/>
            <person name="Coluzzi M."/>
            <person name="della Torre A."/>
            <person name="Roth C.W."/>
            <person name="Louis C."/>
            <person name="Kalush F."/>
            <person name="Mural R.J."/>
            <person name="Myers E.W."/>
            <person name="Adams M.D."/>
            <person name="Smith H.O."/>
            <person name="Broder S."/>
            <person name="Gardner M.J."/>
            <person name="Fraser C.M."/>
            <person name="Birney E."/>
            <person name="Bork P."/>
            <person name="Brey P.T."/>
            <person name="Venter J.C."/>
            <person name="Weissenbach J."/>
            <person name="Kafatos F.C."/>
            <person name="Collins F.H."/>
            <person name="Hoffman S.L."/>
        </authorList>
    </citation>
    <scope>NUCLEOTIDE SEQUENCE [LARGE SCALE GENOMIC DNA]</scope>
    <source>
        <strain>PEST</strain>
    </source>
</reference>
<name>MOCS3_ANOGA</name>
<accession>Q7PY41</accession>